<accession>A9MW03</accession>
<protein>
    <recommendedName>
        <fullName evidence="1">Glutamyl-tRNA reductase</fullName>
        <shortName evidence="1">GluTR</shortName>
        <ecNumber evidence="1">1.2.1.70</ecNumber>
    </recommendedName>
</protein>
<name>HEM1_SALPB</name>
<organism>
    <name type="scientific">Salmonella paratyphi B (strain ATCC BAA-1250 / SPB7)</name>
    <dbReference type="NCBI Taxonomy" id="1016998"/>
    <lineage>
        <taxon>Bacteria</taxon>
        <taxon>Pseudomonadati</taxon>
        <taxon>Pseudomonadota</taxon>
        <taxon>Gammaproteobacteria</taxon>
        <taxon>Enterobacterales</taxon>
        <taxon>Enterobacteriaceae</taxon>
        <taxon>Salmonella</taxon>
    </lineage>
</organism>
<dbReference type="EC" id="1.2.1.70" evidence="1"/>
<dbReference type="EMBL" id="CP000886">
    <property type="protein sequence ID" value="ABX66859.1"/>
    <property type="molecule type" value="Genomic_DNA"/>
</dbReference>
<dbReference type="RefSeq" id="WP_000173208.1">
    <property type="nucleotide sequence ID" value="NC_010102.1"/>
</dbReference>
<dbReference type="SMR" id="A9MW03"/>
<dbReference type="KEGG" id="spq:SPAB_01452"/>
<dbReference type="PATRIC" id="fig|1016998.12.peg.1371"/>
<dbReference type="HOGENOM" id="CLU_035113_2_2_6"/>
<dbReference type="BioCyc" id="SENT1016998:SPAB_RS05935-MONOMER"/>
<dbReference type="UniPathway" id="UPA00251">
    <property type="reaction ID" value="UER00316"/>
</dbReference>
<dbReference type="Proteomes" id="UP000008556">
    <property type="component" value="Chromosome"/>
</dbReference>
<dbReference type="GO" id="GO:0008883">
    <property type="term" value="F:glutamyl-tRNA reductase activity"/>
    <property type="evidence" value="ECO:0007669"/>
    <property type="project" value="UniProtKB-UniRule"/>
</dbReference>
<dbReference type="GO" id="GO:0050661">
    <property type="term" value="F:NADP binding"/>
    <property type="evidence" value="ECO:0007669"/>
    <property type="project" value="InterPro"/>
</dbReference>
<dbReference type="GO" id="GO:0019353">
    <property type="term" value="P:protoporphyrinogen IX biosynthetic process from glutamate"/>
    <property type="evidence" value="ECO:0007669"/>
    <property type="project" value="TreeGrafter"/>
</dbReference>
<dbReference type="CDD" id="cd05213">
    <property type="entry name" value="NAD_bind_Glutamyl_tRNA_reduct"/>
    <property type="match status" value="1"/>
</dbReference>
<dbReference type="FunFam" id="3.30.460.30:FF:000001">
    <property type="entry name" value="Glutamyl-tRNA reductase"/>
    <property type="match status" value="1"/>
</dbReference>
<dbReference type="FunFam" id="3.40.50.720:FF:000031">
    <property type="entry name" value="Glutamyl-tRNA reductase"/>
    <property type="match status" value="1"/>
</dbReference>
<dbReference type="Gene3D" id="3.30.460.30">
    <property type="entry name" value="Glutamyl-tRNA reductase, N-terminal domain"/>
    <property type="match status" value="1"/>
</dbReference>
<dbReference type="Gene3D" id="3.40.50.720">
    <property type="entry name" value="NAD(P)-binding Rossmann-like Domain"/>
    <property type="match status" value="1"/>
</dbReference>
<dbReference type="HAMAP" id="MF_00087">
    <property type="entry name" value="Glu_tRNA_reductase"/>
    <property type="match status" value="1"/>
</dbReference>
<dbReference type="InterPro" id="IPR000343">
    <property type="entry name" value="4pyrrol_synth_GluRdtase"/>
</dbReference>
<dbReference type="InterPro" id="IPR015896">
    <property type="entry name" value="4pyrrol_synth_GluRdtase_dimer"/>
</dbReference>
<dbReference type="InterPro" id="IPR015895">
    <property type="entry name" value="4pyrrol_synth_GluRdtase_N"/>
</dbReference>
<dbReference type="InterPro" id="IPR018214">
    <property type="entry name" value="GluRdtase_CS"/>
</dbReference>
<dbReference type="InterPro" id="IPR036453">
    <property type="entry name" value="GluRdtase_dimer_dom_sf"/>
</dbReference>
<dbReference type="InterPro" id="IPR036343">
    <property type="entry name" value="GluRdtase_N_sf"/>
</dbReference>
<dbReference type="InterPro" id="IPR036291">
    <property type="entry name" value="NAD(P)-bd_dom_sf"/>
</dbReference>
<dbReference type="InterPro" id="IPR006151">
    <property type="entry name" value="Shikm_DH/Glu-tRNA_Rdtase"/>
</dbReference>
<dbReference type="NCBIfam" id="TIGR01035">
    <property type="entry name" value="hemA"/>
    <property type="match status" value="1"/>
</dbReference>
<dbReference type="PANTHER" id="PTHR43013">
    <property type="entry name" value="GLUTAMYL-TRNA REDUCTASE"/>
    <property type="match status" value="1"/>
</dbReference>
<dbReference type="PANTHER" id="PTHR43013:SF1">
    <property type="entry name" value="GLUTAMYL-TRNA REDUCTASE"/>
    <property type="match status" value="1"/>
</dbReference>
<dbReference type="Pfam" id="PF00745">
    <property type="entry name" value="GlutR_dimer"/>
    <property type="match status" value="1"/>
</dbReference>
<dbReference type="Pfam" id="PF05201">
    <property type="entry name" value="GlutR_N"/>
    <property type="match status" value="1"/>
</dbReference>
<dbReference type="Pfam" id="PF01488">
    <property type="entry name" value="Shikimate_DH"/>
    <property type="match status" value="1"/>
</dbReference>
<dbReference type="PIRSF" id="PIRSF000445">
    <property type="entry name" value="4pyrrol_synth_GluRdtase"/>
    <property type="match status" value="1"/>
</dbReference>
<dbReference type="SUPFAM" id="SSF69742">
    <property type="entry name" value="Glutamyl tRNA-reductase catalytic, N-terminal domain"/>
    <property type="match status" value="1"/>
</dbReference>
<dbReference type="SUPFAM" id="SSF69075">
    <property type="entry name" value="Glutamyl tRNA-reductase dimerization domain"/>
    <property type="match status" value="1"/>
</dbReference>
<dbReference type="SUPFAM" id="SSF51735">
    <property type="entry name" value="NAD(P)-binding Rossmann-fold domains"/>
    <property type="match status" value="1"/>
</dbReference>
<dbReference type="PROSITE" id="PS00747">
    <property type="entry name" value="GLUTR"/>
    <property type="match status" value="1"/>
</dbReference>
<gene>
    <name evidence="1" type="primary">hemA</name>
    <name type="ordered locus">SPAB_01452</name>
</gene>
<evidence type="ECO:0000255" key="1">
    <source>
        <dbReference type="HAMAP-Rule" id="MF_00087"/>
    </source>
</evidence>
<feature type="chain" id="PRO_1000075423" description="Glutamyl-tRNA reductase">
    <location>
        <begin position="1"/>
        <end position="418"/>
    </location>
</feature>
<feature type="active site" description="Nucleophile" evidence="1">
    <location>
        <position position="50"/>
    </location>
</feature>
<feature type="binding site" evidence="1">
    <location>
        <begin position="49"/>
        <end position="52"/>
    </location>
    <ligand>
        <name>substrate</name>
    </ligand>
</feature>
<feature type="binding site" evidence="1">
    <location>
        <position position="109"/>
    </location>
    <ligand>
        <name>substrate</name>
    </ligand>
</feature>
<feature type="binding site" evidence="1">
    <location>
        <begin position="114"/>
        <end position="116"/>
    </location>
    <ligand>
        <name>substrate</name>
    </ligand>
</feature>
<feature type="binding site" evidence="1">
    <location>
        <position position="120"/>
    </location>
    <ligand>
        <name>substrate</name>
    </ligand>
</feature>
<feature type="binding site" evidence="1">
    <location>
        <begin position="189"/>
        <end position="194"/>
    </location>
    <ligand>
        <name>NADP(+)</name>
        <dbReference type="ChEBI" id="CHEBI:58349"/>
    </ligand>
</feature>
<feature type="site" description="Important for activity" evidence="1">
    <location>
        <position position="99"/>
    </location>
</feature>
<keyword id="KW-0521">NADP</keyword>
<keyword id="KW-0560">Oxidoreductase</keyword>
<keyword id="KW-0627">Porphyrin biosynthesis</keyword>
<comment type="function">
    <text evidence="1">Catalyzes the NADPH-dependent reduction of glutamyl-tRNA(Glu) to glutamate 1-semialdehyde (GSA).</text>
</comment>
<comment type="catalytic activity">
    <reaction evidence="1">
        <text>(S)-4-amino-5-oxopentanoate + tRNA(Glu) + NADP(+) = L-glutamyl-tRNA(Glu) + NADPH + H(+)</text>
        <dbReference type="Rhea" id="RHEA:12344"/>
        <dbReference type="Rhea" id="RHEA-COMP:9663"/>
        <dbReference type="Rhea" id="RHEA-COMP:9680"/>
        <dbReference type="ChEBI" id="CHEBI:15378"/>
        <dbReference type="ChEBI" id="CHEBI:57501"/>
        <dbReference type="ChEBI" id="CHEBI:57783"/>
        <dbReference type="ChEBI" id="CHEBI:58349"/>
        <dbReference type="ChEBI" id="CHEBI:78442"/>
        <dbReference type="ChEBI" id="CHEBI:78520"/>
        <dbReference type="EC" id="1.2.1.70"/>
    </reaction>
</comment>
<comment type="pathway">
    <text evidence="1">Porphyrin-containing compound metabolism; protoporphyrin-IX biosynthesis; 5-aminolevulinate from L-glutamyl-tRNA(Glu): step 1/2.</text>
</comment>
<comment type="subunit">
    <text evidence="1">Homodimer.</text>
</comment>
<comment type="domain">
    <text evidence="1">Possesses an unusual extended V-shaped dimeric structure with each monomer consisting of three distinct domains arranged along a curved 'spinal' alpha-helix. The N-terminal catalytic domain specifically recognizes the glutamate moiety of the substrate. The second domain is the NADPH-binding domain, and the third C-terminal domain is responsible for dimerization.</text>
</comment>
<comment type="miscellaneous">
    <text evidence="1">During catalysis, the active site Cys acts as a nucleophile attacking the alpha-carbonyl group of tRNA-bound glutamate with the formation of a thioester intermediate between enzyme and glutamate, and the concomitant release of tRNA(Glu). The thioester intermediate is finally reduced by direct hydride transfer from NADPH, to form the product GSA.</text>
</comment>
<comment type="similarity">
    <text evidence="1">Belongs to the glutamyl-tRNA reductase family.</text>
</comment>
<proteinExistence type="inferred from homology"/>
<reference key="1">
    <citation type="submission" date="2007-11" db="EMBL/GenBank/DDBJ databases">
        <authorList>
            <consortium name="The Salmonella enterica serovar Paratyphi B Genome Sequencing Project"/>
            <person name="McClelland M."/>
            <person name="Sanderson E.K."/>
            <person name="Porwollik S."/>
            <person name="Spieth J."/>
            <person name="Clifton W.S."/>
            <person name="Fulton R."/>
            <person name="Cordes M."/>
            <person name="Wollam A."/>
            <person name="Shah N."/>
            <person name="Pepin K."/>
            <person name="Bhonagiri V."/>
            <person name="Nash W."/>
            <person name="Johnson M."/>
            <person name="Thiruvilangam P."/>
            <person name="Wilson R."/>
        </authorList>
    </citation>
    <scope>NUCLEOTIDE SEQUENCE [LARGE SCALE GENOMIC DNA]</scope>
    <source>
        <strain>ATCC BAA-1250 / SPB7</strain>
    </source>
</reference>
<sequence length="418" mass="46105">MTLLALGINHKTAPVSLRERVTFSPDTLDQALDSLLAQPMVQGGVVLSTCNRTELYLSVEEQDNLQEALIRWLCDYHNLNEDDLRNSLYWHQDNDAVSHLMRVASGLDSLVLGEPQILGQVKKAFADSQKGHLNASALERMFQKSFSVAKRVRTETDIGASAVSVAFAACTLARQIFESLSTVTVLLVGAGETIELVARHLREHKVQKMIIANRTRERAQALADEVGAEVISLSDIDARLQDADIIISSTASPLPIIGKGMVERALKSRRNQPMLLVDIAVPRDVEPEVGKLANAYLYSVDDLQSIISHNLAQRQAAAVEAETIVEQEASEFMAWLRAQGASETIREYRSQSEQIRDELTTKALSALQQGGDAQAILQDLAWKLTNRLIHAPTKSLQQAARDGDDERLNILRDSLGLE</sequence>